<evidence type="ECO:0000255" key="1">
    <source>
        <dbReference type="HAMAP-Rule" id="MF_00111"/>
    </source>
</evidence>
<feature type="chain" id="PRO_0000178908" description="UDP-N-acetylglucosamine 1-carboxyvinyltransferase">
    <location>
        <begin position="1"/>
        <end position="430"/>
    </location>
</feature>
<feature type="active site" description="Proton donor" evidence="1">
    <location>
        <position position="126"/>
    </location>
</feature>
<feature type="binding site" evidence="1">
    <location>
        <begin position="22"/>
        <end position="23"/>
    </location>
    <ligand>
        <name>phosphoenolpyruvate</name>
        <dbReference type="ChEBI" id="CHEBI:58702"/>
    </ligand>
</feature>
<feature type="binding site" evidence="1">
    <location>
        <position position="102"/>
    </location>
    <ligand>
        <name>UDP-N-acetyl-alpha-D-glucosamine</name>
        <dbReference type="ChEBI" id="CHEBI:57705"/>
    </ligand>
</feature>
<feature type="binding site" evidence="1">
    <location>
        <begin position="131"/>
        <end position="135"/>
    </location>
    <ligand>
        <name>UDP-N-acetyl-alpha-D-glucosamine</name>
        <dbReference type="ChEBI" id="CHEBI:57705"/>
    </ligand>
</feature>
<feature type="binding site" evidence="1">
    <location>
        <begin position="172"/>
        <end position="175"/>
    </location>
    <ligand>
        <name>UDP-N-acetyl-alpha-D-glucosamine</name>
        <dbReference type="ChEBI" id="CHEBI:57705"/>
    </ligand>
</feature>
<feature type="binding site" evidence="1">
    <location>
        <position position="317"/>
    </location>
    <ligand>
        <name>UDP-N-acetyl-alpha-D-glucosamine</name>
        <dbReference type="ChEBI" id="CHEBI:57705"/>
    </ligand>
</feature>
<feature type="binding site" evidence="1">
    <location>
        <position position="339"/>
    </location>
    <ligand>
        <name>UDP-N-acetyl-alpha-D-glucosamine</name>
        <dbReference type="ChEBI" id="CHEBI:57705"/>
    </ligand>
</feature>
<feature type="modified residue" description="2-(S-cysteinyl)pyruvic acid O-phosphothioketal" evidence="1">
    <location>
        <position position="126"/>
    </location>
</feature>
<gene>
    <name evidence="1" type="primary">murA</name>
    <name type="ordered locus">R00609</name>
    <name type="ORF">SMc02305</name>
</gene>
<sequence>MDRIRIVGGNELHGVIPISGAKNAALPLMIASLLTDDTLTLENVPHLADVEQLIRILGNHGADISVNGRRERQGESYARTVHFTSRNIVSTTAPYELVSKMRASFWVIGPLLAREGKARVSLPGGCAIGTRPVDLFIEGLAALGANIEIDGGYVNATAPAGGLIGARYVFPKVSVGATHVLMMAATLANGTTVLGNAAREPEVVDLAKCLNAMGAKISGQGTSTVTIEGVRSLSGARHRVLPDRIETGTYAMAVAMAGGDVILEDTEASLLDTALEAIRRAGAQISETNSGIRIVRNGAGIKPVDIVTDPFPGFPTDLQAQFMGLMTRSSGVSHITETIFENRFMHVQELARLGAKISLSGQTAKVEGVSRLKGAPVMATDLRASVSLVIAGLAAEGETMVSRVYHLDRGFERLEEKLTRCGAHVERVSD</sequence>
<protein>
    <recommendedName>
        <fullName evidence="1">UDP-N-acetylglucosamine 1-carboxyvinyltransferase</fullName>
        <ecNumber evidence="1">2.5.1.7</ecNumber>
    </recommendedName>
    <alternativeName>
        <fullName evidence="1">Enoylpyruvate transferase</fullName>
    </alternativeName>
    <alternativeName>
        <fullName evidence="1">UDP-N-acetylglucosamine enolpyruvyl transferase</fullName>
        <shortName evidence="1">EPT</shortName>
    </alternativeName>
</protein>
<comment type="function">
    <text evidence="1">Cell wall formation. Adds enolpyruvyl to UDP-N-acetylglucosamine.</text>
</comment>
<comment type="catalytic activity">
    <reaction evidence="1">
        <text>phosphoenolpyruvate + UDP-N-acetyl-alpha-D-glucosamine = UDP-N-acetyl-3-O-(1-carboxyvinyl)-alpha-D-glucosamine + phosphate</text>
        <dbReference type="Rhea" id="RHEA:18681"/>
        <dbReference type="ChEBI" id="CHEBI:43474"/>
        <dbReference type="ChEBI" id="CHEBI:57705"/>
        <dbReference type="ChEBI" id="CHEBI:58702"/>
        <dbReference type="ChEBI" id="CHEBI:68483"/>
        <dbReference type="EC" id="2.5.1.7"/>
    </reaction>
</comment>
<comment type="pathway">
    <text evidence="1">Cell wall biogenesis; peptidoglycan biosynthesis.</text>
</comment>
<comment type="subcellular location">
    <subcellularLocation>
        <location evidence="1">Cytoplasm</location>
    </subcellularLocation>
</comment>
<comment type="similarity">
    <text evidence="1">Belongs to the EPSP synthase family. MurA subfamily.</text>
</comment>
<dbReference type="EC" id="2.5.1.7" evidence="1"/>
<dbReference type="EMBL" id="AL591688">
    <property type="protein sequence ID" value="CAC45181.1"/>
    <property type="molecule type" value="Genomic_DNA"/>
</dbReference>
<dbReference type="RefSeq" id="NP_384715.1">
    <property type="nucleotide sequence ID" value="NC_003047.1"/>
</dbReference>
<dbReference type="RefSeq" id="WP_010968701.1">
    <property type="nucleotide sequence ID" value="NC_003047.1"/>
</dbReference>
<dbReference type="SMR" id="Q92S27"/>
<dbReference type="EnsemblBacteria" id="CAC45181">
    <property type="protein sequence ID" value="CAC45181"/>
    <property type="gene ID" value="SMc02305"/>
</dbReference>
<dbReference type="KEGG" id="sme:SMc02305"/>
<dbReference type="PATRIC" id="fig|266834.11.peg.1982"/>
<dbReference type="eggNOG" id="COG0766">
    <property type="taxonomic scope" value="Bacteria"/>
</dbReference>
<dbReference type="HOGENOM" id="CLU_027387_0_0_5"/>
<dbReference type="OrthoDB" id="9803760at2"/>
<dbReference type="UniPathway" id="UPA00219"/>
<dbReference type="Proteomes" id="UP000001976">
    <property type="component" value="Chromosome"/>
</dbReference>
<dbReference type="GO" id="GO:0005737">
    <property type="term" value="C:cytoplasm"/>
    <property type="evidence" value="ECO:0007669"/>
    <property type="project" value="UniProtKB-SubCell"/>
</dbReference>
<dbReference type="GO" id="GO:0008760">
    <property type="term" value="F:UDP-N-acetylglucosamine 1-carboxyvinyltransferase activity"/>
    <property type="evidence" value="ECO:0007669"/>
    <property type="project" value="UniProtKB-UniRule"/>
</dbReference>
<dbReference type="GO" id="GO:0051301">
    <property type="term" value="P:cell division"/>
    <property type="evidence" value="ECO:0007669"/>
    <property type="project" value="UniProtKB-KW"/>
</dbReference>
<dbReference type="GO" id="GO:0071555">
    <property type="term" value="P:cell wall organization"/>
    <property type="evidence" value="ECO:0007669"/>
    <property type="project" value="UniProtKB-KW"/>
</dbReference>
<dbReference type="GO" id="GO:0009252">
    <property type="term" value="P:peptidoglycan biosynthetic process"/>
    <property type="evidence" value="ECO:0007669"/>
    <property type="project" value="UniProtKB-UniRule"/>
</dbReference>
<dbReference type="GO" id="GO:0008360">
    <property type="term" value="P:regulation of cell shape"/>
    <property type="evidence" value="ECO:0007669"/>
    <property type="project" value="UniProtKB-KW"/>
</dbReference>
<dbReference type="GO" id="GO:0019277">
    <property type="term" value="P:UDP-N-acetylgalactosamine biosynthetic process"/>
    <property type="evidence" value="ECO:0007669"/>
    <property type="project" value="InterPro"/>
</dbReference>
<dbReference type="CDD" id="cd01555">
    <property type="entry name" value="UdpNAET"/>
    <property type="match status" value="1"/>
</dbReference>
<dbReference type="FunFam" id="3.65.10.10:FF:000001">
    <property type="entry name" value="UDP-N-acetylglucosamine 1-carboxyvinyltransferase"/>
    <property type="match status" value="1"/>
</dbReference>
<dbReference type="Gene3D" id="3.65.10.10">
    <property type="entry name" value="Enolpyruvate transferase domain"/>
    <property type="match status" value="2"/>
</dbReference>
<dbReference type="HAMAP" id="MF_00111">
    <property type="entry name" value="MurA"/>
    <property type="match status" value="1"/>
</dbReference>
<dbReference type="InterPro" id="IPR001986">
    <property type="entry name" value="Enolpyruvate_Tfrase_dom"/>
</dbReference>
<dbReference type="InterPro" id="IPR036968">
    <property type="entry name" value="Enolpyruvate_Tfrase_sf"/>
</dbReference>
<dbReference type="InterPro" id="IPR050068">
    <property type="entry name" value="MurA_subfamily"/>
</dbReference>
<dbReference type="InterPro" id="IPR013792">
    <property type="entry name" value="RNA3'P_cycl/enolpyr_Trfase_a/b"/>
</dbReference>
<dbReference type="InterPro" id="IPR005750">
    <property type="entry name" value="UDP_GlcNAc_COvinyl_MurA"/>
</dbReference>
<dbReference type="NCBIfam" id="TIGR01072">
    <property type="entry name" value="murA"/>
    <property type="match status" value="1"/>
</dbReference>
<dbReference type="NCBIfam" id="NF006873">
    <property type="entry name" value="PRK09369.1"/>
    <property type="match status" value="1"/>
</dbReference>
<dbReference type="PANTHER" id="PTHR43783">
    <property type="entry name" value="UDP-N-ACETYLGLUCOSAMINE 1-CARBOXYVINYLTRANSFERASE"/>
    <property type="match status" value="1"/>
</dbReference>
<dbReference type="PANTHER" id="PTHR43783:SF1">
    <property type="entry name" value="UDP-N-ACETYLGLUCOSAMINE 1-CARBOXYVINYLTRANSFERASE"/>
    <property type="match status" value="1"/>
</dbReference>
<dbReference type="Pfam" id="PF00275">
    <property type="entry name" value="EPSP_synthase"/>
    <property type="match status" value="1"/>
</dbReference>
<dbReference type="SUPFAM" id="SSF55205">
    <property type="entry name" value="EPT/RTPC-like"/>
    <property type="match status" value="1"/>
</dbReference>
<keyword id="KW-0131">Cell cycle</keyword>
<keyword id="KW-0132">Cell division</keyword>
<keyword id="KW-0133">Cell shape</keyword>
<keyword id="KW-0961">Cell wall biogenesis/degradation</keyword>
<keyword id="KW-0963">Cytoplasm</keyword>
<keyword id="KW-0573">Peptidoglycan synthesis</keyword>
<keyword id="KW-0670">Pyruvate</keyword>
<keyword id="KW-1185">Reference proteome</keyword>
<keyword id="KW-0808">Transferase</keyword>
<name>MURA_RHIME</name>
<accession>Q92S27</accession>
<reference key="1">
    <citation type="journal article" date="2001" name="Proc. Natl. Acad. Sci. U.S.A.">
        <title>Analysis of the chromosome sequence of the legume symbiont Sinorhizobium meliloti strain 1021.</title>
        <authorList>
            <person name="Capela D."/>
            <person name="Barloy-Hubler F."/>
            <person name="Gouzy J."/>
            <person name="Bothe G."/>
            <person name="Ampe F."/>
            <person name="Batut J."/>
            <person name="Boistard P."/>
            <person name="Becker A."/>
            <person name="Boutry M."/>
            <person name="Cadieu E."/>
            <person name="Dreano S."/>
            <person name="Gloux S."/>
            <person name="Godrie T."/>
            <person name="Goffeau A."/>
            <person name="Kahn D."/>
            <person name="Kiss E."/>
            <person name="Lelaure V."/>
            <person name="Masuy D."/>
            <person name="Pohl T."/>
            <person name="Portetelle D."/>
            <person name="Puehler A."/>
            <person name="Purnelle B."/>
            <person name="Ramsperger U."/>
            <person name="Renard C."/>
            <person name="Thebault P."/>
            <person name="Vandenbol M."/>
            <person name="Weidner S."/>
            <person name="Galibert F."/>
        </authorList>
    </citation>
    <scope>NUCLEOTIDE SEQUENCE [LARGE SCALE GENOMIC DNA]</scope>
    <source>
        <strain>1021</strain>
    </source>
</reference>
<reference key="2">
    <citation type="journal article" date="2001" name="Science">
        <title>The composite genome of the legume symbiont Sinorhizobium meliloti.</title>
        <authorList>
            <person name="Galibert F."/>
            <person name="Finan T.M."/>
            <person name="Long S.R."/>
            <person name="Puehler A."/>
            <person name="Abola P."/>
            <person name="Ampe F."/>
            <person name="Barloy-Hubler F."/>
            <person name="Barnett M.J."/>
            <person name="Becker A."/>
            <person name="Boistard P."/>
            <person name="Bothe G."/>
            <person name="Boutry M."/>
            <person name="Bowser L."/>
            <person name="Buhrmester J."/>
            <person name="Cadieu E."/>
            <person name="Capela D."/>
            <person name="Chain P."/>
            <person name="Cowie A."/>
            <person name="Davis R.W."/>
            <person name="Dreano S."/>
            <person name="Federspiel N.A."/>
            <person name="Fisher R.F."/>
            <person name="Gloux S."/>
            <person name="Godrie T."/>
            <person name="Goffeau A."/>
            <person name="Golding B."/>
            <person name="Gouzy J."/>
            <person name="Gurjal M."/>
            <person name="Hernandez-Lucas I."/>
            <person name="Hong A."/>
            <person name="Huizar L."/>
            <person name="Hyman R.W."/>
            <person name="Jones T."/>
            <person name="Kahn D."/>
            <person name="Kahn M.L."/>
            <person name="Kalman S."/>
            <person name="Keating D.H."/>
            <person name="Kiss E."/>
            <person name="Komp C."/>
            <person name="Lelaure V."/>
            <person name="Masuy D."/>
            <person name="Palm C."/>
            <person name="Peck M.C."/>
            <person name="Pohl T.M."/>
            <person name="Portetelle D."/>
            <person name="Purnelle B."/>
            <person name="Ramsperger U."/>
            <person name="Surzycki R."/>
            <person name="Thebault P."/>
            <person name="Vandenbol M."/>
            <person name="Vorhoelter F.J."/>
            <person name="Weidner S."/>
            <person name="Wells D.H."/>
            <person name="Wong K."/>
            <person name="Yeh K.-C."/>
            <person name="Batut J."/>
        </authorList>
    </citation>
    <scope>NUCLEOTIDE SEQUENCE [LARGE SCALE GENOMIC DNA]</scope>
    <source>
        <strain>1021</strain>
    </source>
</reference>
<organism>
    <name type="scientific">Rhizobium meliloti (strain 1021)</name>
    <name type="common">Ensifer meliloti</name>
    <name type="synonym">Sinorhizobium meliloti</name>
    <dbReference type="NCBI Taxonomy" id="266834"/>
    <lineage>
        <taxon>Bacteria</taxon>
        <taxon>Pseudomonadati</taxon>
        <taxon>Pseudomonadota</taxon>
        <taxon>Alphaproteobacteria</taxon>
        <taxon>Hyphomicrobiales</taxon>
        <taxon>Rhizobiaceae</taxon>
        <taxon>Sinorhizobium/Ensifer group</taxon>
        <taxon>Sinorhizobium</taxon>
    </lineage>
</organism>
<proteinExistence type="inferred from homology"/>